<sequence>MKKSNFSNVNLSMGTGRRKSSVARVYIREGSGNIKVNNRDFDSYIQLENLRTMALSPLVLTNTLGKYDLYINVYGGGISGQSGAIRHGISRALFKLDESNKMILRSNGFLTRDSRKVERKKFGQKKARKSFQFSKR</sequence>
<evidence type="ECO:0000255" key="1">
    <source>
        <dbReference type="HAMAP-Rule" id="MF_00532"/>
    </source>
</evidence>
<evidence type="ECO:0000305" key="2"/>
<comment type="similarity">
    <text evidence="1">Belongs to the universal ribosomal protein uS9 family.</text>
</comment>
<feature type="chain" id="PRO_1000128085" description="Small ribosomal subunit protein uS9">
    <location>
        <begin position="1"/>
        <end position="136"/>
    </location>
</feature>
<dbReference type="EMBL" id="CP001205">
    <property type="protein sequence ID" value="ACK74793.1"/>
    <property type="molecule type" value="Genomic_DNA"/>
</dbReference>
<dbReference type="RefSeq" id="WP_002656683.1">
    <property type="nucleotide sequence ID" value="NC_011728.1"/>
</dbReference>
<dbReference type="SMR" id="B7J1R3"/>
<dbReference type="GeneID" id="56567767"/>
<dbReference type="KEGG" id="bbz:BbuZS7_0342"/>
<dbReference type="HOGENOM" id="CLU_046483_2_1_12"/>
<dbReference type="Proteomes" id="UP000006901">
    <property type="component" value="Chromosome"/>
</dbReference>
<dbReference type="GO" id="GO:0022627">
    <property type="term" value="C:cytosolic small ribosomal subunit"/>
    <property type="evidence" value="ECO:0007669"/>
    <property type="project" value="TreeGrafter"/>
</dbReference>
<dbReference type="GO" id="GO:0003723">
    <property type="term" value="F:RNA binding"/>
    <property type="evidence" value="ECO:0007669"/>
    <property type="project" value="TreeGrafter"/>
</dbReference>
<dbReference type="GO" id="GO:0003735">
    <property type="term" value="F:structural constituent of ribosome"/>
    <property type="evidence" value="ECO:0007669"/>
    <property type="project" value="InterPro"/>
</dbReference>
<dbReference type="GO" id="GO:0006412">
    <property type="term" value="P:translation"/>
    <property type="evidence" value="ECO:0007669"/>
    <property type="project" value="UniProtKB-UniRule"/>
</dbReference>
<dbReference type="FunFam" id="3.30.230.10:FF:000001">
    <property type="entry name" value="30S ribosomal protein S9"/>
    <property type="match status" value="1"/>
</dbReference>
<dbReference type="Gene3D" id="3.30.230.10">
    <property type="match status" value="1"/>
</dbReference>
<dbReference type="HAMAP" id="MF_00532_B">
    <property type="entry name" value="Ribosomal_uS9_B"/>
    <property type="match status" value="1"/>
</dbReference>
<dbReference type="InterPro" id="IPR020568">
    <property type="entry name" value="Ribosomal_Su5_D2-typ_SF"/>
</dbReference>
<dbReference type="InterPro" id="IPR000754">
    <property type="entry name" value="Ribosomal_uS9"/>
</dbReference>
<dbReference type="InterPro" id="IPR023035">
    <property type="entry name" value="Ribosomal_uS9_bac/plastid"/>
</dbReference>
<dbReference type="InterPro" id="IPR020574">
    <property type="entry name" value="Ribosomal_uS9_CS"/>
</dbReference>
<dbReference type="InterPro" id="IPR014721">
    <property type="entry name" value="Ribsml_uS5_D2-typ_fold_subgr"/>
</dbReference>
<dbReference type="NCBIfam" id="NF001099">
    <property type="entry name" value="PRK00132.1"/>
    <property type="match status" value="1"/>
</dbReference>
<dbReference type="PANTHER" id="PTHR21569">
    <property type="entry name" value="RIBOSOMAL PROTEIN S9"/>
    <property type="match status" value="1"/>
</dbReference>
<dbReference type="PANTHER" id="PTHR21569:SF1">
    <property type="entry name" value="SMALL RIBOSOMAL SUBUNIT PROTEIN US9M"/>
    <property type="match status" value="1"/>
</dbReference>
<dbReference type="Pfam" id="PF00380">
    <property type="entry name" value="Ribosomal_S9"/>
    <property type="match status" value="1"/>
</dbReference>
<dbReference type="SUPFAM" id="SSF54211">
    <property type="entry name" value="Ribosomal protein S5 domain 2-like"/>
    <property type="match status" value="1"/>
</dbReference>
<dbReference type="PROSITE" id="PS00360">
    <property type="entry name" value="RIBOSOMAL_S9"/>
    <property type="match status" value="1"/>
</dbReference>
<gene>
    <name evidence="1" type="primary">rpsI</name>
    <name type="ordered locus">BbuZS7_0342</name>
</gene>
<organism>
    <name type="scientific">Borreliella burgdorferi (strain ZS7)</name>
    <name type="common">Borrelia burgdorferi</name>
    <dbReference type="NCBI Taxonomy" id="445985"/>
    <lineage>
        <taxon>Bacteria</taxon>
        <taxon>Pseudomonadati</taxon>
        <taxon>Spirochaetota</taxon>
        <taxon>Spirochaetia</taxon>
        <taxon>Spirochaetales</taxon>
        <taxon>Borreliaceae</taxon>
        <taxon>Borreliella</taxon>
    </lineage>
</organism>
<keyword id="KW-0687">Ribonucleoprotein</keyword>
<keyword id="KW-0689">Ribosomal protein</keyword>
<name>RS9_BORBZ</name>
<proteinExistence type="inferred from homology"/>
<reference key="1">
    <citation type="journal article" date="2011" name="J. Bacteriol.">
        <title>Whole-genome sequences of thirteen isolates of Borrelia burgdorferi.</title>
        <authorList>
            <person name="Schutzer S.E."/>
            <person name="Fraser-Liggett C.M."/>
            <person name="Casjens S.R."/>
            <person name="Qiu W.G."/>
            <person name="Dunn J.J."/>
            <person name="Mongodin E.F."/>
            <person name="Luft B.J."/>
        </authorList>
    </citation>
    <scope>NUCLEOTIDE SEQUENCE [LARGE SCALE GENOMIC DNA]</scope>
    <source>
        <strain>ZS7</strain>
    </source>
</reference>
<accession>B7J1R3</accession>
<protein>
    <recommendedName>
        <fullName evidence="1">Small ribosomal subunit protein uS9</fullName>
    </recommendedName>
    <alternativeName>
        <fullName evidence="2">30S ribosomal protein S9</fullName>
    </alternativeName>
</protein>